<evidence type="ECO:0000255" key="1">
    <source>
        <dbReference type="HAMAP-Rule" id="MF_01602"/>
    </source>
</evidence>
<evidence type="ECO:0000255" key="2">
    <source>
        <dbReference type="PROSITE-ProRule" id="PRU01067"/>
    </source>
</evidence>
<name>LPLA_ECOSE</name>
<accession>B6I6N3</accession>
<reference key="1">
    <citation type="journal article" date="2008" name="DNA Res.">
        <title>Complete genome sequence and comparative analysis of the wild-type commensal Escherichia coli strain SE11 isolated from a healthy adult.</title>
        <authorList>
            <person name="Oshima K."/>
            <person name="Toh H."/>
            <person name="Ogura Y."/>
            <person name="Sasamoto H."/>
            <person name="Morita H."/>
            <person name="Park S.-H."/>
            <person name="Ooka T."/>
            <person name="Iyoda S."/>
            <person name="Taylor T.D."/>
            <person name="Hayashi T."/>
            <person name="Itoh K."/>
            <person name="Hattori M."/>
        </authorList>
    </citation>
    <scope>NUCLEOTIDE SEQUENCE [LARGE SCALE GENOMIC DNA]</scope>
    <source>
        <strain>SE11</strain>
    </source>
</reference>
<protein>
    <recommendedName>
        <fullName evidence="1">Lipoate-protein ligase A</fullName>
        <ecNumber evidence="1">6.3.1.20</ecNumber>
    </recommendedName>
    <alternativeName>
        <fullName evidence="1">Lipoate--protein ligase</fullName>
    </alternativeName>
</protein>
<dbReference type="EC" id="6.3.1.20" evidence="1"/>
<dbReference type="EMBL" id="AP009240">
    <property type="protein sequence ID" value="BAG80185.1"/>
    <property type="molecule type" value="Genomic_DNA"/>
</dbReference>
<dbReference type="RefSeq" id="WP_000105865.1">
    <property type="nucleotide sequence ID" value="NC_011415.1"/>
</dbReference>
<dbReference type="SMR" id="B6I6N3"/>
<dbReference type="KEGG" id="ecy:ECSE_4661"/>
<dbReference type="HOGENOM" id="CLU_022986_0_1_6"/>
<dbReference type="UniPathway" id="UPA00537">
    <property type="reaction ID" value="UER00594"/>
</dbReference>
<dbReference type="UniPathway" id="UPA00537">
    <property type="reaction ID" value="UER00595"/>
</dbReference>
<dbReference type="Proteomes" id="UP000008199">
    <property type="component" value="Chromosome"/>
</dbReference>
<dbReference type="GO" id="GO:0005829">
    <property type="term" value="C:cytosol"/>
    <property type="evidence" value="ECO:0007669"/>
    <property type="project" value="TreeGrafter"/>
</dbReference>
<dbReference type="GO" id="GO:0005524">
    <property type="term" value="F:ATP binding"/>
    <property type="evidence" value="ECO:0007669"/>
    <property type="project" value="UniProtKB-KW"/>
</dbReference>
<dbReference type="GO" id="GO:0016979">
    <property type="term" value="F:lipoate-protein ligase activity"/>
    <property type="evidence" value="ECO:0007669"/>
    <property type="project" value="UniProtKB-UniRule"/>
</dbReference>
<dbReference type="GO" id="GO:0017118">
    <property type="term" value="F:lipoyltransferase activity"/>
    <property type="evidence" value="ECO:0007669"/>
    <property type="project" value="TreeGrafter"/>
</dbReference>
<dbReference type="GO" id="GO:0036211">
    <property type="term" value="P:protein modification process"/>
    <property type="evidence" value="ECO:0007669"/>
    <property type="project" value="InterPro"/>
</dbReference>
<dbReference type="CDD" id="cd16435">
    <property type="entry name" value="BPL_LplA_LipB"/>
    <property type="match status" value="1"/>
</dbReference>
<dbReference type="FunFam" id="3.30.390.50:FF:000002">
    <property type="entry name" value="Lipoate-protein ligase A"/>
    <property type="match status" value="1"/>
</dbReference>
<dbReference type="FunFam" id="3.30.930.10:FF:000024">
    <property type="entry name" value="Lipoate-protein ligase A"/>
    <property type="match status" value="1"/>
</dbReference>
<dbReference type="Gene3D" id="3.30.930.10">
    <property type="entry name" value="Bira Bifunctional Protein, Domain 2"/>
    <property type="match status" value="1"/>
</dbReference>
<dbReference type="Gene3D" id="3.30.390.50">
    <property type="entry name" value="CO dehydrogenase flavoprotein, C-terminal domain"/>
    <property type="match status" value="1"/>
</dbReference>
<dbReference type="HAMAP" id="MF_01602">
    <property type="entry name" value="LplA"/>
    <property type="match status" value="1"/>
</dbReference>
<dbReference type="InterPro" id="IPR045864">
    <property type="entry name" value="aa-tRNA-synth_II/BPL/LPL"/>
</dbReference>
<dbReference type="InterPro" id="IPR004143">
    <property type="entry name" value="BPL_LPL_catalytic"/>
</dbReference>
<dbReference type="InterPro" id="IPR023741">
    <property type="entry name" value="Lipoate_ligase_A"/>
</dbReference>
<dbReference type="InterPro" id="IPR019491">
    <property type="entry name" value="Lipoate_protein_ligase_C"/>
</dbReference>
<dbReference type="InterPro" id="IPR004562">
    <property type="entry name" value="LipoylTrfase_LipoateP_Ligase"/>
</dbReference>
<dbReference type="NCBIfam" id="TIGR00545">
    <property type="entry name" value="lipoyltrans"/>
    <property type="match status" value="1"/>
</dbReference>
<dbReference type="PANTHER" id="PTHR12561">
    <property type="entry name" value="LIPOATE-PROTEIN LIGASE"/>
    <property type="match status" value="1"/>
</dbReference>
<dbReference type="PANTHER" id="PTHR12561:SF3">
    <property type="entry name" value="LIPOYLTRANSFERASE 1, MITOCHONDRIAL"/>
    <property type="match status" value="1"/>
</dbReference>
<dbReference type="Pfam" id="PF10437">
    <property type="entry name" value="Lip_prot_lig_C"/>
    <property type="match status" value="1"/>
</dbReference>
<dbReference type="Pfam" id="PF21948">
    <property type="entry name" value="LplA-B_cat"/>
    <property type="match status" value="1"/>
</dbReference>
<dbReference type="SUPFAM" id="SSF55681">
    <property type="entry name" value="Class II aaRS and biotin synthetases"/>
    <property type="match status" value="1"/>
</dbReference>
<dbReference type="SUPFAM" id="SSF82649">
    <property type="entry name" value="SufE/NifU"/>
    <property type="match status" value="1"/>
</dbReference>
<dbReference type="PROSITE" id="PS51733">
    <property type="entry name" value="BPL_LPL_CATALYTIC"/>
    <property type="match status" value="1"/>
</dbReference>
<proteinExistence type="inferred from homology"/>
<feature type="chain" id="PRO_1000148106" description="Lipoate-protein ligase A">
    <location>
        <begin position="1"/>
        <end position="338"/>
    </location>
</feature>
<feature type="domain" description="BPL/LPL catalytic" evidence="2">
    <location>
        <begin position="29"/>
        <end position="216"/>
    </location>
</feature>
<feature type="binding site" evidence="1">
    <location>
        <position position="71"/>
    </location>
    <ligand>
        <name>ATP</name>
        <dbReference type="ChEBI" id="CHEBI:30616"/>
    </ligand>
</feature>
<feature type="binding site" evidence="1">
    <location>
        <begin position="76"/>
        <end position="79"/>
    </location>
    <ligand>
        <name>ATP</name>
        <dbReference type="ChEBI" id="CHEBI:30616"/>
    </ligand>
</feature>
<feature type="binding site" evidence="1">
    <location>
        <position position="134"/>
    </location>
    <ligand>
        <name>(R)-lipoate</name>
        <dbReference type="ChEBI" id="CHEBI:83088"/>
    </ligand>
</feature>
<feature type="binding site" evidence="1">
    <location>
        <position position="134"/>
    </location>
    <ligand>
        <name>ATP</name>
        <dbReference type="ChEBI" id="CHEBI:30616"/>
    </ligand>
</feature>
<comment type="function">
    <text evidence="1">Catalyzes both the ATP-dependent activation of exogenously supplied lipoate to lipoyl-AMP and the transfer of the activated lipoyl onto the lipoyl domains of lipoate-dependent enzymes.</text>
</comment>
<comment type="catalytic activity">
    <reaction evidence="1">
        <text>L-lysyl-[lipoyl-carrier protein] + (R)-lipoate + ATP = N(6)-[(R)-lipoyl]-L-lysyl-[lipoyl-carrier protein] + AMP + diphosphate + H(+)</text>
        <dbReference type="Rhea" id="RHEA:49288"/>
        <dbReference type="Rhea" id="RHEA-COMP:10500"/>
        <dbReference type="Rhea" id="RHEA-COMP:10502"/>
        <dbReference type="ChEBI" id="CHEBI:15378"/>
        <dbReference type="ChEBI" id="CHEBI:29969"/>
        <dbReference type="ChEBI" id="CHEBI:30616"/>
        <dbReference type="ChEBI" id="CHEBI:33019"/>
        <dbReference type="ChEBI" id="CHEBI:83088"/>
        <dbReference type="ChEBI" id="CHEBI:83099"/>
        <dbReference type="ChEBI" id="CHEBI:456215"/>
        <dbReference type="EC" id="6.3.1.20"/>
    </reaction>
</comment>
<comment type="pathway">
    <text evidence="1">Protein modification; protein lipoylation via exogenous pathway; protein N(6)-(lipoyl)lysine from lipoate: step 1/2.</text>
</comment>
<comment type="pathway">
    <text evidence="1">Protein modification; protein lipoylation via exogenous pathway; protein N(6)-(lipoyl)lysine from lipoate: step 2/2.</text>
</comment>
<comment type="subunit">
    <text evidence="1">Monomer.</text>
</comment>
<comment type="subcellular location">
    <subcellularLocation>
        <location evidence="1">Cytoplasm</location>
    </subcellularLocation>
</comment>
<comment type="miscellaneous">
    <text evidence="1">In the transfer reaction, the free carboxyl group of lipoic acid is attached via an amide linkage to the epsilon-amino group of a specific lysine residue of lipoyl domains of lipoate-dependent enzymes.</text>
</comment>
<comment type="similarity">
    <text evidence="1">Belongs to the LplA family.</text>
</comment>
<organism>
    <name type="scientific">Escherichia coli (strain SE11)</name>
    <dbReference type="NCBI Taxonomy" id="409438"/>
    <lineage>
        <taxon>Bacteria</taxon>
        <taxon>Pseudomonadati</taxon>
        <taxon>Pseudomonadota</taxon>
        <taxon>Gammaproteobacteria</taxon>
        <taxon>Enterobacterales</taxon>
        <taxon>Enterobacteriaceae</taxon>
        <taxon>Escherichia</taxon>
    </lineage>
</organism>
<gene>
    <name evidence="1" type="primary">lplA</name>
    <name type="ordered locus">ECSE_4661</name>
</gene>
<keyword id="KW-0067">ATP-binding</keyword>
<keyword id="KW-0963">Cytoplasm</keyword>
<keyword id="KW-0436">Ligase</keyword>
<keyword id="KW-0547">Nucleotide-binding</keyword>
<sequence>MSTLRLLISDSYDPWFNLAVEECIFRQMPATQRVLFLWRNADTVVIGRAQNPWKECNTRRMEEDNVRLARRSSGGGAVFHDLGNTCFTFMAGKPEYDKTISTSIVLNALNALGVSAEASGRNDLVVKTAEGDRKVSGSAYRETKDRGFHHGTLLLNADLSRLANYLNPDKKKLAAKGITSVRSRVTNLTELLPGITHEQVCEAITKAFFAHYGERVEAEIISPDKTPDLPNFAETFARQSSWEWNFGQAPAFSHLLDERFSWGGVELHFDVEKGHITRAQVFTDSLNPAPLEALAGRLQGGLYRADMLQQECEALLVDFPDQEKELRELSTWIAGAVR</sequence>